<comment type="function">
    <text evidence="1">Catalyzes the reversible transfer of the terminal phosphate group between ATP and AMP. Plays an important role in cellular energy homeostasis and in adenine nucleotide metabolism.</text>
</comment>
<comment type="catalytic activity">
    <reaction evidence="1">
        <text>AMP + ATP = 2 ADP</text>
        <dbReference type="Rhea" id="RHEA:12973"/>
        <dbReference type="ChEBI" id="CHEBI:30616"/>
        <dbReference type="ChEBI" id="CHEBI:456215"/>
        <dbReference type="ChEBI" id="CHEBI:456216"/>
        <dbReference type="EC" id="2.7.4.3"/>
    </reaction>
</comment>
<comment type="pathway">
    <text evidence="1">Purine metabolism; AMP biosynthesis via salvage pathway; AMP from ADP: step 1/1.</text>
</comment>
<comment type="subunit">
    <text evidence="1">Monomer.</text>
</comment>
<comment type="subcellular location">
    <subcellularLocation>
        <location evidence="1">Cytoplasm</location>
    </subcellularLocation>
</comment>
<comment type="domain">
    <text evidence="1">Consists of three domains, a large central CORE domain and two small peripheral domains, NMPbind and LID, which undergo movements during catalysis. The LID domain closes over the site of phosphoryl transfer upon ATP binding. Assembling and dissambling the active center during each catalytic cycle provides an effective means to prevent ATP hydrolysis.</text>
</comment>
<comment type="similarity">
    <text evidence="1">Belongs to the adenylate kinase family.</text>
</comment>
<protein>
    <recommendedName>
        <fullName evidence="1">Adenylate kinase</fullName>
        <shortName evidence="1">AK</shortName>
        <ecNumber evidence="1">2.7.4.3</ecNumber>
    </recommendedName>
    <alternativeName>
        <fullName evidence="1">ATP-AMP transphosphorylase</fullName>
    </alternativeName>
    <alternativeName>
        <fullName evidence="1">ATP:AMP phosphotransferase</fullName>
    </alternativeName>
    <alternativeName>
        <fullName evidence="1">Adenylate monophosphate kinase</fullName>
    </alternativeName>
</protein>
<evidence type="ECO:0000255" key="1">
    <source>
        <dbReference type="HAMAP-Rule" id="MF_00235"/>
    </source>
</evidence>
<accession>P0DH56</accession>
<accession>P49980</accession>
<accession>P69344</accession>
<reference key="1">
    <citation type="journal article" date="1995" name="Proc. Natl. Acad. Sci. U.S.A.">
        <title>Electrophoretic variation in adenylate kinase of Neisseria meningitidis is due to inter- and intraspecies recombination.</title>
        <authorList>
            <person name="Feil E."/>
            <person name="Carpenter G."/>
            <person name="Spratt B.G."/>
        </authorList>
    </citation>
    <scope>NUCLEOTIDE SEQUENCE [GENOMIC DNA]</scope>
    <source>
        <strain>020</strain>
        <strain>1001</strain>
        <strain>3910</strain>
        <strain>4100</strain>
        <strain>4146</strain>
        <strain>5005</strain>
        <strain>5010</strain>
        <strain>5013</strain>
        <strain>5035</strain>
        <strain>5043</strain>
        <strain>ATCC 43831</strain>
        <strain>HF110</strain>
        <strain>HF113</strain>
        <strain>HF116</strain>
        <strain>HF130</strain>
        <strain>HF147</strain>
        <strain>HF16</strain>
        <strain>HF175</strain>
        <strain>HF200</strain>
        <strain>HF4</strain>
        <strain>HF46</strain>
        <strain>HF79</strain>
        <strain>HF8</strain>
        <strain>HF85</strain>
        <strain>M470</strain>
        <strain>N94II</strain>
        <strain>P63</strain>
        <strain>S3446</strain>
    </source>
</reference>
<organism>
    <name type="scientific">Neisseria meningitidis</name>
    <dbReference type="NCBI Taxonomy" id="487"/>
    <lineage>
        <taxon>Bacteria</taxon>
        <taxon>Pseudomonadati</taxon>
        <taxon>Pseudomonadota</taxon>
        <taxon>Betaproteobacteria</taxon>
        <taxon>Neisseriales</taxon>
        <taxon>Neisseriaceae</taxon>
        <taxon>Neisseria</taxon>
    </lineage>
</organism>
<dbReference type="EC" id="2.7.4.3" evidence="1"/>
<dbReference type="EMBL" id="L36469">
    <property type="protein sequence ID" value="AAA99172.1"/>
    <property type="molecule type" value="Genomic_DNA"/>
</dbReference>
<dbReference type="EMBL" id="L36470">
    <property type="protein sequence ID" value="AAA99173.1"/>
    <property type="molecule type" value="Genomic_DNA"/>
</dbReference>
<dbReference type="EMBL" id="L47130">
    <property type="protein sequence ID" value="AAC41495.1"/>
    <property type="molecule type" value="Genomic_DNA"/>
</dbReference>
<dbReference type="EMBL" id="L47131">
    <property type="protein sequence ID" value="AAC41494.1"/>
    <property type="molecule type" value="Genomic_DNA"/>
</dbReference>
<dbReference type="EMBL" id="L47132">
    <property type="protein sequence ID" value="AAC41497.1"/>
    <property type="molecule type" value="Genomic_DNA"/>
</dbReference>
<dbReference type="EMBL" id="L47133">
    <property type="protein sequence ID" value="AAC41496.1"/>
    <property type="molecule type" value="Genomic_DNA"/>
</dbReference>
<dbReference type="EMBL" id="L47134">
    <property type="protein sequence ID" value="AAC41498.1"/>
    <property type="molecule type" value="Genomic_DNA"/>
</dbReference>
<dbReference type="EMBL" id="L47136">
    <property type="protein sequence ID" value="AAC41499.1"/>
    <property type="molecule type" value="Genomic_DNA"/>
</dbReference>
<dbReference type="EMBL" id="L47137">
    <property type="protein sequence ID" value="AAC41501.1"/>
    <property type="molecule type" value="Genomic_DNA"/>
</dbReference>
<dbReference type="EMBL" id="L47138">
    <property type="protein sequence ID" value="AAC41502.1"/>
    <property type="molecule type" value="Genomic_DNA"/>
</dbReference>
<dbReference type="EMBL" id="L47139">
    <property type="protein sequence ID" value="AAC41503.1"/>
    <property type="molecule type" value="Genomic_DNA"/>
</dbReference>
<dbReference type="EMBL" id="L47140">
    <property type="protein sequence ID" value="AAC41504.1"/>
    <property type="molecule type" value="Genomic_DNA"/>
</dbReference>
<dbReference type="EMBL" id="L47141">
    <property type="protein sequence ID" value="AAC41505.1"/>
    <property type="molecule type" value="Genomic_DNA"/>
</dbReference>
<dbReference type="EMBL" id="L47142">
    <property type="protein sequence ID" value="AAC41508.1"/>
    <property type="molecule type" value="Genomic_DNA"/>
</dbReference>
<dbReference type="EMBL" id="L47143">
    <property type="protein sequence ID" value="AAC41506.1"/>
    <property type="molecule type" value="Genomic_DNA"/>
</dbReference>
<dbReference type="EMBL" id="L47144">
    <property type="protein sequence ID" value="AAC41507.1"/>
    <property type="molecule type" value="Genomic_DNA"/>
</dbReference>
<dbReference type="EMBL" id="L47145">
    <property type="protein sequence ID" value="AAC41510.1"/>
    <property type="molecule type" value="Genomic_DNA"/>
</dbReference>
<dbReference type="EMBL" id="L47146">
    <property type="protein sequence ID" value="AAC41509.1"/>
    <property type="molecule type" value="Genomic_DNA"/>
</dbReference>
<dbReference type="EMBL" id="L47147">
    <property type="protein sequence ID" value="AAC41511.1"/>
    <property type="molecule type" value="Genomic_DNA"/>
</dbReference>
<dbReference type="EMBL" id="L47148">
    <property type="protein sequence ID" value="AAC41512.1"/>
    <property type="molecule type" value="Genomic_DNA"/>
</dbReference>
<dbReference type="EMBL" id="L47149">
    <property type="protein sequence ID" value="AAC41514.1"/>
    <property type="molecule type" value="Genomic_DNA"/>
</dbReference>
<dbReference type="EMBL" id="L47150">
    <property type="protein sequence ID" value="AAC41513.1"/>
    <property type="molecule type" value="Genomic_DNA"/>
</dbReference>
<dbReference type="EMBL" id="L47151">
    <property type="protein sequence ID" value="AAC41515.1"/>
    <property type="molecule type" value="Genomic_DNA"/>
</dbReference>
<dbReference type="EMBL" id="L47152">
    <property type="protein sequence ID" value="AAC41516.1"/>
    <property type="molecule type" value="Genomic_DNA"/>
</dbReference>
<dbReference type="EMBL" id="L47153">
    <property type="protein sequence ID" value="AAC41517.1"/>
    <property type="molecule type" value="Genomic_DNA"/>
</dbReference>
<dbReference type="EMBL" id="L47154">
    <property type="protein sequence ID" value="AAC41489.1"/>
    <property type="molecule type" value="Genomic_DNA"/>
</dbReference>
<dbReference type="EMBL" id="L47155">
    <property type="protein sequence ID" value="AAC41493.1"/>
    <property type="molecule type" value="Genomic_DNA"/>
</dbReference>
<dbReference type="EMBL" id="L47157">
    <property type="protein sequence ID" value="AAC41491.1"/>
    <property type="molecule type" value="Genomic_DNA"/>
</dbReference>
<dbReference type="EMBL" id="L47158">
    <property type="protein sequence ID" value="AAC41492.1"/>
    <property type="molecule type" value="Genomic_DNA"/>
</dbReference>
<dbReference type="PIR" id="S61841">
    <property type="entry name" value="S61841"/>
</dbReference>
<dbReference type="RefSeq" id="WP_002213936.1">
    <property type="nucleotide sequence ID" value="NZ_WSPC01000002.1"/>
</dbReference>
<dbReference type="RefSeq" id="WP_002219494.1">
    <property type="nucleotide sequence ID" value="NZ_VDCD01000129.1"/>
</dbReference>
<dbReference type="RefSeq" id="WP_019272635.1">
    <property type="nucleotide sequence ID" value="NZ_QQHT01000001.1"/>
</dbReference>
<dbReference type="SMR" id="P0DH56"/>
<dbReference type="GeneID" id="83614749"/>
<dbReference type="GeneID" id="93386353"/>
<dbReference type="OMA" id="VYHEQTA"/>
<dbReference type="UniPathway" id="UPA00588">
    <property type="reaction ID" value="UER00649"/>
</dbReference>
<dbReference type="GO" id="GO:0005737">
    <property type="term" value="C:cytoplasm"/>
    <property type="evidence" value="ECO:0007669"/>
    <property type="project" value="UniProtKB-SubCell"/>
</dbReference>
<dbReference type="GO" id="GO:0004017">
    <property type="term" value="F:adenylate kinase activity"/>
    <property type="evidence" value="ECO:0007669"/>
    <property type="project" value="UniProtKB-UniRule"/>
</dbReference>
<dbReference type="GO" id="GO:0005524">
    <property type="term" value="F:ATP binding"/>
    <property type="evidence" value="ECO:0007669"/>
    <property type="project" value="UniProtKB-UniRule"/>
</dbReference>
<dbReference type="GO" id="GO:0044209">
    <property type="term" value="P:AMP salvage"/>
    <property type="evidence" value="ECO:0007669"/>
    <property type="project" value="UniProtKB-UniRule"/>
</dbReference>
<dbReference type="CDD" id="cd01428">
    <property type="entry name" value="ADK"/>
    <property type="match status" value="1"/>
</dbReference>
<dbReference type="FunFam" id="3.40.50.300:FF:000106">
    <property type="entry name" value="Adenylate kinase mitochondrial"/>
    <property type="match status" value="1"/>
</dbReference>
<dbReference type="Gene3D" id="3.40.50.300">
    <property type="entry name" value="P-loop containing nucleotide triphosphate hydrolases"/>
    <property type="match status" value="1"/>
</dbReference>
<dbReference type="HAMAP" id="MF_00235">
    <property type="entry name" value="Adenylate_kinase_Adk"/>
    <property type="match status" value="1"/>
</dbReference>
<dbReference type="InterPro" id="IPR006259">
    <property type="entry name" value="Adenyl_kin_sub"/>
</dbReference>
<dbReference type="InterPro" id="IPR000850">
    <property type="entry name" value="Adenylat/UMP-CMP_kin"/>
</dbReference>
<dbReference type="InterPro" id="IPR033690">
    <property type="entry name" value="Adenylat_kinase_CS"/>
</dbReference>
<dbReference type="InterPro" id="IPR007862">
    <property type="entry name" value="Adenylate_kinase_lid-dom"/>
</dbReference>
<dbReference type="InterPro" id="IPR027417">
    <property type="entry name" value="P-loop_NTPase"/>
</dbReference>
<dbReference type="NCBIfam" id="TIGR01351">
    <property type="entry name" value="adk"/>
    <property type="match status" value="1"/>
</dbReference>
<dbReference type="NCBIfam" id="NF001379">
    <property type="entry name" value="PRK00279.1-1"/>
    <property type="match status" value="1"/>
</dbReference>
<dbReference type="NCBIfam" id="NF001380">
    <property type="entry name" value="PRK00279.1-2"/>
    <property type="match status" value="1"/>
</dbReference>
<dbReference type="NCBIfam" id="NF001381">
    <property type="entry name" value="PRK00279.1-3"/>
    <property type="match status" value="1"/>
</dbReference>
<dbReference type="PANTHER" id="PTHR23359">
    <property type="entry name" value="NUCLEOTIDE KINASE"/>
    <property type="match status" value="1"/>
</dbReference>
<dbReference type="Pfam" id="PF00406">
    <property type="entry name" value="ADK"/>
    <property type="match status" value="1"/>
</dbReference>
<dbReference type="Pfam" id="PF05191">
    <property type="entry name" value="ADK_lid"/>
    <property type="match status" value="1"/>
</dbReference>
<dbReference type="PRINTS" id="PR00094">
    <property type="entry name" value="ADENYLTKNASE"/>
</dbReference>
<dbReference type="SUPFAM" id="SSF52540">
    <property type="entry name" value="P-loop containing nucleoside triphosphate hydrolases"/>
    <property type="match status" value="1"/>
</dbReference>
<dbReference type="PROSITE" id="PS00113">
    <property type="entry name" value="ADENYLATE_KINASE"/>
    <property type="match status" value="1"/>
</dbReference>
<sequence>MKALLLGAPGAGKGTQAQFITAAFGIPQISTGDMLRAAIKAGTPLGLEAKKIIDEGGLVRDDIIIGMVKERIAQDDCKNGFLFDGFPRTLAQAEAMVEAGVDLDAVVEIDVPDSVIVDRMSGRRVHLASGRTYHVTYNPPKVEGKDDVTGEDLIQRDDDKEETVKKRLAVYHEQTEVLVDFYSKLEGEHAPKYIKVDGTQPVEAVKAEVLGALGK</sequence>
<keyword id="KW-0067">ATP-binding</keyword>
<keyword id="KW-0963">Cytoplasm</keyword>
<keyword id="KW-0418">Kinase</keyword>
<keyword id="KW-0545">Nucleotide biosynthesis</keyword>
<keyword id="KW-0547">Nucleotide-binding</keyword>
<keyword id="KW-0808">Transferase</keyword>
<gene>
    <name evidence="1" type="primary">adk</name>
</gene>
<feature type="chain" id="PRO_0000158814" description="Adenylate kinase">
    <location>
        <begin position="1"/>
        <end position="215"/>
    </location>
</feature>
<feature type="region of interest" description="NMP" evidence="1">
    <location>
        <begin position="30"/>
        <end position="59"/>
    </location>
</feature>
<feature type="region of interest" description="LID" evidence="1">
    <location>
        <begin position="122"/>
        <end position="159"/>
    </location>
</feature>
<feature type="binding site" evidence="1">
    <location>
        <begin position="10"/>
        <end position="15"/>
    </location>
    <ligand>
        <name>ATP</name>
        <dbReference type="ChEBI" id="CHEBI:30616"/>
    </ligand>
</feature>
<feature type="binding site" evidence="1">
    <location>
        <position position="31"/>
    </location>
    <ligand>
        <name>AMP</name>
        <dbReference type="ChEBI" id="CHEBI:456215"/>
    </ligand>
</feature>
<feature type="binding site" evidence="1">
    <location>
        <position position="36"/>
    </location>
    <ligand>
        <name>AMP</name>
        <dbReference type="ChEBI" id="CHEBI:456215"/>
    </ligand>
</feature>
<feature type="binding site" evidence="1">
    <location>
        <begin position="57"/>
        <end position="59"/>
    </location>
    <ligand>
        <name>AMP</name>
        <dbReference type="ChEBI" id="CHEBI:456215"/>
    </ligand>
</feature>
<feature type="binding site" evidence="1">
    <location>
        <begin position="85"/>
        <end position="88"/>
    </location>
    <ligand>
        <name>AMP</name>
        <dbReference type="ChEBI" id="CHEBI:456215"/>
    </ligand>
</feature>
<feature type="binding site" evidence="1">
    <location>
        <position position="92"/>
    </location>
    <ligand>
        <name>AMP</name>
        <dbReference type="ChEBI" id="CHEBI:456215"/>
    </ligand>
</feature>
<feature type="binding site" evidence="1">
    <location>
        <position position="123"/>
    </location>
    <ligand>
        <name>ATP</name>
        <dbReference type="ChEBI" id="CHEBI:30616"/>
    </ligand>
</feature>
<feature type="binding site" evidence="1">
    <location>
        <begin position="132"/>
        <end position="133"/>
    </location>
    <ligand>
        <name>ATP</name>
        <dbReference type="ChEBI" id="CHEBI:30616"/>
    </ligand>
</feature>
<feature type="binding site" evidence="1">
    <location>
        <position position="156"/>
    </location>
    <ligand>
        <name>AMP</name>
        <dbReference type="ChEBI" id="CHEBI:456215"/>
    </ligand>
</feature>
<feature type="binding site" evidence="1">
    <location>
        <position position="167"/>
    </location>
    <ligand>
        <name>AMP</name>
        <dbReference type="ChEBI" id="CHEBI:456215"/>
    </ligand>
</feature>
<feature type="binding site" evidence="1">
    <location>
        <position position="200"/>
    </location>
    <ligand>
        <name>ATP</name>
        <dbReference type="ChEBI" id="CHEBI:30616"/>
    </ligand>
</feature>
<feature type="sequence variant" description="In strain: S3446 and 020.">
    <original>L</original>
    <variation>F</variation>
    <location>
        <position position="5"/>
    </location>
</feature>
<feature type="sequence variant" description="In strain: HF4, HF8, HF16, HF85, HF110, HF116 and HF175.">
    <original>E</original>
    <variation>K</variation>
    <location>
        <position position="55"/>
    </location>
</feature>
<feature type="sequence variant" description="In strain: HF130.">
    <original>P</original>
    <variation>S</variation>
    <location>
        <position position="139"/>
    </location>
</feature>
<feature type="sequence variant" description="In strain: HF4, HF8, HF16, HF79, HF85, HF110, HF113, HF116, HF147, HF175 and HF200.">
    <original>P</original>
    <variation>A</variation>
    <location>
        <position position="201"/>
    </location>
</feature>
<feature type="sequence variant" description="In strain: HF4, HF8, HF16, HF79, HF85, HF110, HF113, HF116, HF147, HF175 and HF200.">
    <original>GA</original>
    <variation>KG</variation>
    <location>
        <begin position="211"/>
        <end position="212"/>
    </location>
</feature>
<name>KAD_NEIME</name>
<proteinExistence type="inferred from homology"/>